<sequence length="66" mass="7062">MSQEKLKSKVEQASGSLKEGAGKLTGDKELEAKGFVEKTIAKGKELADDAKDAVEEAVDVVKEKLK</sequence>
<feature type="chain" id="PRO_0000210042" description="UPF0337 protein SAG0606">
    <location>
        <begin position="1"/>
        <end position="66"/>
    </location>
</feature>
<feature type="region of interest" description="Disordered" evidence="1">
    <location>
        <begin position="1"/>
        <end position="23"/>
    </location>
</feature>
<feature type="compositionally biased region" description="Basic and acidic residues" evidence="1">
    <location>
        <begin position="1"/>
        <end position="10"/>
    </location>
</feature>
<accession>Q8E0W1</accession>
<dbReference type="EMBL" id="AE009948">
    <property type="protein sequence ID" value="AAM99505.1"/>
    <property type="molecule type" value="Genomic_DNA"/>
</dbReference>
<dbReference type="RefSeq" id="NP_687633.1">
    <property type="nucleotide sequence ID" value="NC_004116.1"/>
</dbReference>
<dbReference type="RefSeq" id="WP_000076715.1">
    <property type="nucleotide sequence ID" value="NC_004116.1"/>
</dbReference>
<dbReference type="SMR" id="Q8E0W1"/>
<dbReference type="STRING" id="208435.SAG0606"/>
<dbReference type="KEGG" id="sag:SAG0606"/>
<dbReference type="PATRIC" id="fig|208435.3.peg.603"/>
<dbReference type="HOGENOM" id="CLU_135567_0_0_9"/>
<dbReference type="OrthoDB" id="1632173at2"/>
<dbReference type="Proteomes" id="UP000000821">
    <property type="component" value="Chromosome"/>
</dbReference>
<dbReference type="Gene3D" id="1.10.1470.10">
    <property type="entry name" value="YjbJ"/>
    <property type="match status" value="1"/>
</dbReference>
<dbReference type="InterPro" id="IPR008462">
    <property type="entry name" value="CsbD"/>
</dbReference>
<dbReference type="InterPro" id="IPR036629">
    <property type="entry name" value="YjbJ_sf"/>
</dbReference>
<dbReference type="Pfam" id="PF05532">
    <property type="entry name" value="CsbD"/>
    <property type="match status" value="1"/>
</dbReference>
<dbReference type="SUPFAM" id="SSF69047">
    <property type="entry name" value="Hypothetical protein YjbJ"/>
    <property type="match status" value="1"/>
</dbReference>
<proteinExistence type="inferred from homology"/>
<gene>
    <name type="ordered locus">SAG0606</name>
</gene>
<name>Y606_STRA5</name>
<protein>
    <recommendedName>
        <fullName>UPF0337 protein SAG0606</fullName>
    </recommendedName>
</protein>
<comment type="similarity">
    <text evidence="2">Belongs to the UPF0337 (CsbD) family.</text>
</comment>
<reference key="1">
    <citation type="journal article" date="2002" name="Proc. Natl. Acad. Sci. U.S.A.">
        <title>Complete genome sequence and comparative genomic analysis of an emerging human pathogen, serotype V Streptococcus agalactiae.</title>
        <authorList>
            <person name="Tettelin H."/>
            <person name="Masignani V."/>
            <person name="Cieslewicz M.J."/>
            <person name="Eisen J.A."/>
            <person name="Peterson S.N."/>
            <person name="Wessels M.R."/>
            <person name="Paulsen I.T."/>
            <person name="Nelson K.E."/>
            <person name="Margarit I."/>
            <person name="Read T.D."/>
            <person name="Madoff L.C."/>
            <person name="Wolf A.M."/>
            <person name="Beanan M.J."/>
            <person name="Brinkac L.M."/>
            <person name="Daugherty S.C."/>
            <person name="DeBoy R.T."/>
            <person name="Durkin A.S."/>
            <person name="Kolonay J.F."/>
            <person name="Madupu R."/>
            <person name="Lewis M.R."/>
            <person name="Radune D."/>
            <person name="Fedorova N.B."/>
            <person name="Scanlan D."/>
            <person name="Khouri H.M."/>
            <person name="Mulligan S."/>
            <person name="Carty H.A."/>
            <person name="Cline R.T."/>
            <person name="Van Aken S.E."/>
            <person name="Gill J."/>
            <person name="Scarselli M."/>
            <person name="Mora M."/>
            <person name="Iacobini E.T."/>
            <person name="Brettoni C."/>
            <person name="Galli G."/>
            <person name="Mariani M."/>
            <person name="Vegni F."/>
            <person name="Maione D."/>
            <person name="Rinaudo D."/>
            <person name="Rappuoli R."/>
            <person name="Telford J.L."/>
            <person name="Kasper D.L."/>
            <person name="Grandi G."/>
            <person name="Fraser C.M."/>
        </authorList>
    </citation>
    <scope>NUCLEOTIDE SEQUENCE [LARGE SCALE GENOMIC DNA]</scope>
    <source>
        <strain>ATCC BAA-611 / 2603 V/R</strain>
    </source>
</reference>
<evidence type="ECO:0000256" key="1">
    <source>
        <dbReference type="SAM" id="MobiDB-lite"/>
    </source>
</evidence>
<evidence type="ECO:0000305" key="2"/>
<keyword id="KW-1185">Reference proteome</keyword>
<organism>
    <name type="scientific">Streptococcus agalactiae serotype V (strain ATCC BAA-611 / 2603 V/R)</name>
    <dbReference type="NCBI Taxonomy" id="208435"/>
    <lineage>
        <taxon>Bacteria</taxon>
        <taxon>Bacillati</taxon>
        <taxon>Bacillota</taxon>
        <taxon>Bacilli</taxon>
        <taxon>Lactobacillales</taxon>
        <taxon>Streptococcaceae</taxon>
        <taxon>Streptococcus</taxon>
    </lineage>
</organism>